<evidence type="ECO:0000255" key="1">
    <source>
        <dbReference type="HAMAP-Rule" id="MF_00014"/>
    </source>
</evidence>
<keyword id="KW-0143">Chaperone</keyword>
<keyword id="KW-0963">Cytoplasm</keyword>
<keyword id="KW-0690">Ribosome biogenesis</keyword>
<keyword id="KW-0698">rRNA processing</keyword>
<dbReference type="EMBL" id="AE017196">
    <property type="protein sequence ID" value="AAS14926.1"/>
    <property type="molecule type" value="Genomic_DNA"/>
</dbReference>
<dbReference type="RefSeq" id="WP_006279718.1">
    <property type="nucleotide sequence ID" value="NZ_OX384529.1"/>
</dbReference>
<dbReference type="SMR" id="Q73FP4"/>
<dbReference type="EnsemblBacteria" id="AAS14926">
    <property type="protein sequence ID" value="AAS14926"/>
    <property type="gene ID" value="WD_1282"/>
</dbReference>
<dbReference type="GeneID" id="70036747"/>
<dbReference type="KEGG" id="wol:WD_1282"/>
<dbReference type="eggNOG" id="COG0806">
    <property type="taxonomic scope" value="Bacteria"/>
</dbReference>
<dbReference type="Proteomes" id="UP000008215">
    <property type="component" value="Chromosome"/>
</dbReference>
<dbReference type="GO" id="GO:0005737">
    <property type="term" value="C:cytoplasm"/>
    <property type="evidence" value="ECO:0007669"/>
    <property type="project" value="UniProtKB-SubCell"/>
</dbReference>
<dbReference type="GO" id="GO:0005840">
    <property type="term" value="C:ribosome"/>
    <property type="evidence" value="ECO:0007669"/>
    <property type="project" value="InterPro"/>
</dbReference>
<dbReference type="GO" id="GO:0043022">
    <property type="term" value="F:ribosome binding"/>
    <property type="evidence" value="ECO:0007669"/>
    <property type="project" value="InterPro"/>
</dbReference>
<dbReference type="GO" id="GO:0042274">
    <property type="term" value="P:ribosomal small subunit biogenesis"/>
    <property type="evidence" value="ECO:0007669"/>
    <property type="project" value="UniProtKB-UniRule"/>
</dbReference>
<dbReference type="GO" id="GO:0006364">
    <property type="term" value="P:rRNA processing"/>
    <property type="evidence" value="ECO:0007669"/>
    <property type="project" value="UniProtKB-UniRule"/>
</dbReference>
<dbReference type="Gene3D" id="2.30.30.240">
    <property type="entry name" value="PRC-barrel domain"/>
    <property type="match status" value="1"/>
</dbReference>
<dbReference type="Gene3D" id="2.40.30.60">
    <property type="entry name" value="RimM"/>
    <property type="match status" value="1"/>
</dbReference>
<dbReference type="HAMAP" id="MF_00014">
    <property type="entry name" value="Ribosome_mat_RimM"/>
    <property type="match status" value="1"/>
</dbReference>
<dbReference type="InterPro" id="IPR027275">
    <property type="entry name" value="PRC-brl_dom"/>
</dbReference>
<dbReference type="InterPro" id="IPR011033">
    <property type="entry name" value="PRC_barrel-like_sf"/>
</dbReference>
<dbReference type="InterPro" id="IPR011961">
    <property type="entry name" value="RimM"/>
</dbReference>
<dbReference type="InterPro" id="IPR002676">
    <property type="entry name" value="RimM_N"/>
</dbReference>
<dbReference type="InterPro" id="IPR036976">
    <property type="entry name" value="RimM_N_sf"/>
</dbReference>
<dbReference type="InterPro" id="IPR009000">
    <property type="entry name" value="Transl_B-barrel_sf"/>
</dbReference>
<dbReference type="NCBIfam" id="TIGR02273">
    <property type="entry name" value="16S_RimM"/>
    <property type="match status" value="1"/>
</dbReference>
<dbReference type="NCBIfam" id="NF011186">
    <property type="entry name" value="PRK14592.1"/>
    <property type="match status" value="1"/>
</dbReference>
<dbReference type="PANTHER" id="PTHR33692">
    <property type="entry name" value="RIBOSOME MATURATION FACTOR RIMM"/>
    <property type="match status" value="1"/>
</dbReference>
<dbReference type="PANTHER" id="PTHR33692:SF1">
    <property type="entry name" value="RIBOSOME MATURATION FACTOR RIMM"/>
    <property type="match status" value="1"/>
</dbReference>
<dbReference type="Pfam" id="PF05239">
    <property type="entry name" value="PRC"/>
    <property type="match status" value="1"/>
</dbReference>
<dbReference type="Pfam" id="PF01782">
    <property type="entry name" value="RimM"/>
    <property type="match status" value="1"/>
</dbReference>
<dbReference type="SUPFAM" id="SSF50346">
    <property type="entry name" value="PRC-barrel domain"/>
    <property type="match status" value="1"/>
</dbReference>
<dbReference type="SUPFAM" id="SSF50447">
    <property type="entry name" value="Translation proteins"/>
    <property type="match status" value="1"/>
</dbReference>
<protein>
    <recommendedName>
        <fullName evidence="1">Ribosome maturation factor RimM</fullName>
    </recommendedName>
</protein>
<sequence length="168" mass="19035">MNDNLVCLGIITSPHGIKGAVKVKTFTEKPENISLYGKLISGDENYKIDSVSVIGDNLVIATISGVNSRNEAELLRNKKLYIERSKLPELNDEDEFYQSDLVDMEVRLKSNELYGYVKSVYNFGSGDILEILVISTKKRIMLSFTKEIFPHINIKGRYIVLNIPEFID</sequence>
<name>RIMM_WOLPM</name>
<accession>Q73FP4</accession>
<proteinExistence type="inferred from homology"/>
<reference key="1">
    <citation type="journal article" date="2004" name="PLoS Biol.">
        <title>Phylogenomics of the reproductive parasite Wolbachia pipientis wMel: a streamlined genome overrun by mobile genetic elements.</title>
        <authorList>
            <person name="Wu M."/>
            <person name="Sun L.V."/>
            <person name="Vamathevan J.J."/>
            <person name="Riegler M."/>
            <person name="DeBoy R.T."/>
            <person name="Brownlie J.C."/>
            <person name="McGraw E.A."/>
            <person name="Martin W."/>
            <person name="Esser C."/>
            <person name="Ahmadinejad N."/>
            <person name="Wiegand C."/>
            <person name="Madupu R."/>
            <person name="Beanan M.J."/>
            <person name="Brinkac L.M."/>
            <person name="Daugherty S.C."/>
            <person name="Durkin A.S."/>
            <person name="Kolonay J.F."/>
            <person name="Nelson W.C."/>
            <person name="Mohamoud Y."/>
            <person name="Lee P."/>
            <person name="Berry K.J."/>
            <person name="Young M.B."/>
            <person name="Utterback T.R."/>
            <person name="Weidman J.F."/>
            <person name="Nierman W.C."/>
            <person name="Paulsen I.T."/>
            <person name="Nelson K.E."/>
            <person name="Tettelin H."/>
            <person name="O'Neill S.L."/>
            <person name="Eisen J.A."/>
        </authorList>
    </citation>
    <scope>NUCLEOTIDE SEQUENCE [LARGE SCALE GENOMIC DNA]</scope>
</reference>
<organism>
    <name type="scientific">Wolbachia pipientis wMel</name>
    <dbReference type="NCBI Taxonomy" id="163164"/>
    <lineage>
        <taxon>Bacteria</taxon>
        <taxon>Pseudomonadati</taxon>
        <taxon>Pseudomonadota</taxon>
        <taxon>Alphaproteobacteria</taxon>
        <taxon>Rickettsiales</taxon>
        <taxon>Anaplasmataceae</taxon>
        <taxon>Wolbachieae</taxon>
        <taxon>Wolbachia</taxon>
    </lineage>
</organism>
<feature type="chain" id="PRO_0000163388" description="Ribosome maturation factor RimM">
    <location>
        <begin position="1"/>
        <end position="168"/>
    </location>
</feature>
<feature type="domain" description="PRC barrel" evidence="1">
    <location>
        <begin position="93"/>
        <end position="168"/>
    </location>
</feature>
<gene>
    <name evidence="1" type="primary">rimM</name>
    <name type="ordered locus">WD_1282</name>
</gene>
<comment type="function">
    <text evidence="1">An accessory protein needed during the final step in the assembly of 30S ribosomal subunit, possibly for assembly of the head region. Essential for efficient processing of 16S rRNA. May be needed both before and after RbfA during the maturation of 16S rRNA. It has affinity for free ribosomal 30S subunits but not for 70S ribosomes.</text>
</comment>
<comment type="subunit">
    <text evidence="1">Binds ribosomal protein uS19.</text>
</comment>
<comment type="subcellular location">
    <subcellularLocation>
        <location evidence="1">Cytoplasm</location>
    </subcellularLocation>
</comment>
<comment type="domain">
    <text evidence="1">The PRC barrel domain binds ribosomal protein uS19.</text>
</comment>
<comment type="similarity">
    <text evidence="1">Belongs to the RimM family.</text>
</comment>